<evidence type="ECO:0000256" key="1">
    <source>
        <dbReference type="SAM" id="MobiDB-lite"/>
    </source>
</evidence>
<evidence type="ECO:0000269" key="2">
    <source>
    </source>
</evidence>
<evidence type="ECO:0000269" key="3">
    <source>
    </source>
</evidence>
<evidence type="ECO:0000269" key="4">
    <source>
    </source>
</evidence>
<evidence type="ECO:0000269" key="5">
    <source>
    </source>
</evidence>
<evidence type="ECO:0000269" key="6">
    <source>
    </source>
</evidence>
<evidence type="ECO:0000269" key="7">
    <source>
    </source>
</evidence>
<evidence type="ECO:0000305" key="8"/>
<evidence type="ECO:0007744" key="9">
    <source>
    </source>
</evidence>
<accession>P40028</accession>
<accession>D3DLU1</accession>
<accession>Q02463</accession>
<name>YEN1_YEAST</name>
<feature type="chain" id="PRO_0000202629" description="Holliday junction resolvase YEN1">
    <location>
        <begin position="1"/>
        <end position="759"/>
    </location>
</feature>
<feature type="region of interest" description="Disordered" evidence="1">
    <location>
        <begin position="62"/>
        <end position="83"/>
    </location>
</feature>
<feature type="region of interest" description="Disordered" evidence="1">
    <location>
        <begin position="498"/>
        <end position="518"/>
    </location>
</feature>
<feature type="region of interest" description="Disordered" evidence="1">
    <location>
        <begin position="683"/>
        <end position="702"/>
    </location>
</feature>
<feature type="compositionally biased region" description="Low complexity" evidence="1">
    <location>
        <begin position="500"/>
        <end position="512"/>
    </location>
</feature>
<feature type="modified residue" description="Phosphoserine" evidence="9">
    <location>
        <position position="730"/>
    </location>
</feature>
<feature type="modified residue" description="Phosphoserine" evidence="9">
    <location>
        <position position="731"/>
    </location>
</feature>
<feature type="mutagenesis site" description="Mutants do not survive after treatment with DNA-damaging agent MMS." evidence="7">
    <original>D</original>
    <variation>N</variation>
    <location>
        <position position="41"/>
    </location>
</feature>
<feature type="mutagenesis site" description="Mutants show a slight growth defect after treatment with DNA-damaging agent MMS." evidence="7">
    <original>I</original>
    <variation>E</variation>
    <location>
        <position position="97"/>
    </location>
</feature>
<feature type="mutagenesis site" description="Mutants show a very strong growth defect after treatment with DNA-damaging agent MMS." evidence="7">
    <original>K</original>
    <variation>E</variation>
    <location>
        <position position="298"/>
    </location>
</feature>
<feature type="mutagenesis site" description="Mutants show a growth defect after treatment with DNA-damaging agent MMS." evidence="7">
    <original>K</original>
    <variation>E</variation>
    <location>
        <position position="469"/>
    </location>
</feature>
<feature type="mutagenesis site" description="Mutants show a growth defect after treatment with DNA-damaging agent MMS." evidence="7">
    <original>F</original>
    <variation>A</variation>
    <location>
        <position position="478"/>
    </location>
</feature>
<feature type="mutagenesis site" description="Mutants show a growth defect after treatment with DNA-damaging agent MMS." evidence="7">
    <original>K</original>
    <variation>E</variation>
    <location>
        <position position="484"/>
    </location>
</feature>
<feature type="mutagenesis site" description="Mutants show a strong growth defect after treatment with DNA-damaging agent MMS." evidence="7">
    <original>R</original>
    <variation>E</variation>
    <location>
        <position position="486"/>
    </location>
</feature>
<feature type="mutagenesis site" description="Mutants show a strong growth defect after treatment with DNA-damaging agent MMS." evidence="7">
    <original>Y</original>
    <variation>A</variation>
    <location>
        <position position="487"/>
    </location>
</feature>
<feature type="mutagenesis site" description="Mutants show a growth defect after treatment with DNA-damaging agent MMS." evidence="7">
    <original>N</original>
    <variation>A</variation>
    <location>
        <position position="526"/>
    </location>
</feature>
<feature type="mutagenesis site" description="Mutants show a growth defect after treatment with DNA-damaging agent MMS." evidence="7">
    <original>L</original>
    <variation>D</variation>
    <location>
        <position position="528"/>
    </location>
</feature>
<feature type="mutagenesis site" description="Mutants show a growth defect after treatment with DNA-damaging agent MMS." evidence="7">
    <original>W</original>
    <variation>A</variation>
    <location>
        <position position="529"/>
    </location>
</feature>
<feature type="mutagenesis site" description="Mutants show no effect after treatment with DNA-damaging agent MMS." evidence="7">
    <original>L</original>
    <variation>A</variation>
    <location>
        <position position="530"/>
    </location>
</feature>
<feature type="sequence conflict" description="In Ref. 2; AAB64576." evidence="8" ref="2">
    <original>A</original>
    <variation>P</variation>
    <location>
        <position position="59"/>
    </location>
</feature>
<feature type="sequence conflict" description="In Ref. 1; AAA60376." evidence="8" ref="1">
    <original>LL</original>
    <variation>FV</variation>
    <location>
        <begin position="164"/>
        <end position="165"/>
    </location>
</feature>
<feature type="sequence conflict" description="In Ref. 1; AAA60376." evidence="8" ref="1">
    <original>Y</original>
    <variation>C</variation>
    <location>
        <position position="346"/>
    </location>
</feature>
<sequence>MGVSQIWEFLKPYLQDSRIPLRKFVIDFNKSQKRAPRIAIDAYGWLFECGFIQNIDISARSRSRSRSPTRSPRDSDIDSSQEYYGSRSYTTTGKAVINFISRLKELLSLNVEFLLVFDGVMKPSFKRKFNHEQNATTCDDEKEYYSSWEQHVKNHEVYGNCKGLLAPSDPEFISLVRKLLDLMNISYVIACGEGEAQCVWLQVSGAVDFILSNDSDTLVFGGEKILKNYSKFYDDFGPSSITSHSPSRHHDSKESFVTVIDLPKINKVAGKKFDRLSLLFFSVLLGADYNRGVKGLGKNKSLQLAQCEDPNFSMEFYDIFKDFNLEDLTSESLRKSRYRLFQKRLYLYCKDHSVELFGRNYPVLLNQGSFEGWPSTVAIMHYFHPIVQPYFDEEVLSDKYINMAGNGHYRNLNFNELKYFLQSLNLPQISSFDKWFHDSMHEMFLLREFLSIDESDNIGKGNMRITEEKIMNIDGGKFQIPCFKIRYTTFLPNIPISSQSPLKRSNSPSRSKSPTRRQMDIMEHPNSLWLPKYLIPQSHPLVIQYYETQQLIQKEKEKKGKKSNKSRLPQKNNLDEFLRKHTSPIKSIGKVGESRKEILEPVRKRLFVDTDEDTSLEEIPAPTRLTTVDEHSDNDDDSLIFVDEITNSQSVLDSSPGKRIRDLTQDEQVDVWKDVIEISPIKKSRTTNAEKNPPESGLKSRSSITINARLQGTKMLPPNLTAPRLEREHSSVLDQLVTDAQDTVDRFVACDSDSSSTIE</sequence>
<keyword id="KW-0963">Cytoplasm</keyword>
<keyword id="KW-0227">DNA damage</keyword>
<keyword id="KW-0234">DNA repair</keyword>
<keyword id="KW-0255">Endonuclease</keyword>
<keyword id="KW-0378">Hydrolase</keyword>
<keyword id="KW-0540">Nuclease</keyword>
<keyword id="KW-0539">Nucleus</keyword>
<keyword id="KW-0597">Phosphoprotein</keyword>
<keyword id="KW-1185">Reference proteome</keyword>
<dbReference type="EC" id="3.1.-.-"/>
<dbReference type="EMBL" id="U13615">
    <property type="protein sequence ID" value="AAA60376.1"/>
    <property type="status" value="ALT_FRAME"/>
    <property type="molecule type" value="Genomic_DNA"/>
</dbReference>
<dbReference type="EMBL" id="U18796">
    <property type="protein sequence ID" value="AAB64576.1"/>
    <property type="molecule type" value="Genomic_DNA"/>
</dbReference>
<dbReference type="EMBL" id="BK006939">
    <property type="protein sequence ID" value="DAA07695.2"/>
    <property type="molecule type" value="Genomic_DNA"/>
</dbReference>
<dbReference type="PIR" id="S50544">
    <property type="entry name" value="S50544"/>
</dbReference>
<dbReference type="RefSeq" id="NP_010959.2">
    <property type="nucleotide sequence ID" value="NM_001178932.2"/>
</dbReference>
<dbReference type="BioGRID" id="36777">
    <property type="interactions" value="72"/>
</dbReference>
<dbReference type="DIP" id="DIP-6450N"/>
<dbReference type="FunCoup" id="P40028">
    <property type="interactions" value="121"/>
</dbReference>
<dbReference type="IntAct" id="P40028">
    <property type="interactions" value="9"/>
</dbReference>
<dbReference type="MINT" id="P40028"/>
<dbReference type="STRING" id="4932.YER041W"/>
<dbReference type="iPTMnet" id="P40028"/>
<dbReference type="PaxDb" id="4932-YER041W"/>
<dbReference type="PeptideAtlas" id="P40028"/>
<dbReference type="EnsemblFungi" id="YER041W_mRNA">
    <property type="protein sequence ID" value="YER041W"/>
    <property type="gene ID" value="YER041W"/>
</dbReference>
<dbReference type="GeneID" id="856764"/>
<dbReference type="KEGG" id="sce:YER041W"/>
<dbReference type="AGR" id="SGD:S000000843"/>
<dbReference type="SGD" id="S000000843">
    <property type="gene designation" value="YEN1"/>
</dbReference>
<dbReference type="VEuPathDB" id="FungiDB:YER041W"/>
<dbReference type="eggNOG" id="KOG2520">
    <property type="taxonomic scope" value="Eukaryota"/>
</dbReference>
<dbReference type="HOGENOM" id="CLU_016401_0_0_1"/>
<dbReference type="InParanoid" id="P40028"/>
<dbReference type="OMA" id="IMHYFHP"/>
<dbReference type="OrthoDB" id="2959108at2759"/>
<dbReference type="BioCyc" id="YEAST:G3O-30222-MONOMER"/>
<dbReference type="BRENDA" id="3.1.21.10">
    <property type="organism ID" value="984"/>
</dbReference>
<dbReference type="BioGRID-ORCS" id="856764">
    <property type="hits" value="3 hits in 10 CRISPR screens"/>
</dbReference>
<dbReference type="PRO" id="PR:P40028"/>
<dbReference type="Proteomes" id="UP000002311">
    <property type="component" value="Chromosome V"/>
</dbReference>
<dbReference type="RNAct" id="P40028">
    <property type="molecule type" value="protein"/>
</dbReference>
<dbReference type="GO" id="GO:0005737">
    <property type="term" value="C:cytoplasm"/>
    <property type="evidence" value="ECO:0000314"/>
    <property type="project" value="SGD"/>
</dbReference>
<dbReference type="GO" id="GO:0005634">
    <property type="term" value="C:nucleus"/>
    <property type="evidence" value="ECO:0000314"/>
    <property type="project" value="SGD"/>
</dbReference>
<dbReference type="GO" id="GO:0008409">
    <property type="term" value="F:5'-3' exonuclease activity"/>
    <property type="evidence" value="ECO:0000318"/>
    <property type="project" value="GO_Central"/>
</dbReference>
<dbReference type="GO" id="GO:0017108">
    <property type="term" value="F:5'-flap endonuclease activity"/>
    <property type="evidence" value="ECO:0000250"/>
    <property type="project" value="UniProtKB"/>
</dbReference>
<dbReference type="GO" id="GO:0008821">
    <property type="term" value="F:crossover junction DNA endonuclease activity"/>
    <property type="evidence" value="ECO:0000314"/>
    <property type="project" value="SGD"/>
</dbReference>
<dbReference type="GO" id="GO:0051908">
    <property type="term" value="F:double-stranded DNA 5'-3' DNA exonuclease activity"/>
    <property type="evidence" value="ECO:0000314"/>
    <property type="project" value="SGD"/>
</dbReference>
<dbReference type="GO" id="GO:0000400">
    <property type="term" value="F:four-way junction DNA binding"/>
    <property type="evidence" value="ECO:0000250"/>
    <property type="project" value="UniProtKB"/>
</dbReference>
<dbReference type="GO" id="GO:0000287">
    <property type="term" value="F:magnesium ion binding"/>
    <property type="evidence" value="ECO:0000250"/>
    <property type="project" value="UniProtKB"/>
</dbReference>
<dbReference type="GO" id="GO:0042803">
    <property type="term" value="F:protein homodimerization activity"/>
    <property type="evidence" value="ECO:0000250"/>
    <property type="project" value="UniProtKB"/>
</dbReference>
<dbReference type="GO" id="GO:0006974">
    <property type="term" value="P:DNA damage response"/>
    <property type="evidence" value="ECO:0000316"/>
    <property type="project" value="SGD"/>
</dbReference>
<dbReference type="GO" id="GO:0006281">
    <property type="term" value="P:DNA repair"/>
    <property type="evidence" value="ECO:0000314"/>
    <property type="project" value="SGD"/>
</dbReference>
<dbReference type="GO" id="GO:0031297">
    <property type="term" value="P:replication fork processing"/>
    <property type="evidence" value="ECO:0000250"/>
    <property type="project" value="UniProtKB"/>
</dbReference>
<dbReference type="CDD" id="cd09906">
    <property type="entry name" value="H3TH_YEN1"/>
    <property type="match status" value="1"/>
</dbReference>
<dbReference type="CDD" id="cd09870">
    <property type="entry name" value="PIN_YEN1"/>
    <property type="match status" value="1"/>
</dbReference>
<dbReference type="Gene3D" id="3.40.50.1010">
    <property type="entry name" value="5'-nuclease"/>
    <property type="match status" value="1"/>
</dbReference>
<dbReference type="InterPro" id="IPR036279">
    <property type="entry name" value="5-3_exonuclease_C_sf"/>
</dbReference>
<dbReference type="InterPro" id="IPR029060">
    <property type="entry name" value="PIN-like_dom_sf"/>
</dbReference>
<dbReference type="InterPro" id="IPR006086">
    <property type="entry name" value="XPG-I_dom"/>
</dbReference>
<dbReference type="InterPro" id="IPR006084">
    <property type="entry name" value="XPG/Rad2"/>
</dbReference>
<dbReference type="InterPro" id="IPR006085">
    <property type="entry name" value="XPG_DNA_repair_N"/>
</dbReference>
<dbReference type="InterPro" id="IPR037316">
    <property type="entry name" value="Yen1_H3TH"/>
</dbReference>
<dbReference type="PANTHER" id="PTHR11081">
    <property type="entry name" value="FLAP ENDONUCLEASE FAMILY MEMBER"/>
    <property type="match status" value="1"/>
</dbReference>
<dbReference type="PANTHER" id="PTHR11081:SF72">
    <property type="entry name" value="HOLLIDAY JUNCTION RESOLVASE YEN1"/>
    <property type="match status" value="1"/>
</dbReference>
<dbReference type="Pfam" id="PF00867">
    <property type="entry name" value="XPG_I"/>
    <property type="match status" value="1"/>
</dbReference>
<dbReference type="PRINTS" id="PR00853">
    <property type="entry name" value="XPGRADSUPER"/>
</dbReference>
<dbReference type="SMART" id="SM00484">
    <property type="entry name" value="XPGI"/>
    <property type="match status" value="1"/>
</dbReference>
<dbReference type="SMART" id="SM00485">
    <property type="entry name" value="XPGN"/>
    <property type="match status" value="1"/>
</dbReference>
<dbReference type="SUPFAM" id="SSF47807">
    <property type="entry name" value="5' to 3' exonuclease, C-terminal subdomain"/>
    <property type="match status" value="1"/>
</dbReference>
<dbReference type="SUPFAM" id="SSF88723">
    <property type="entry name" value="PIN domain-like"/>
    <property type="match status" value="1"/>
</dbReference>
<reference key="1">
    <citation type="submission" date="1994-08" db="EMBL/GenBank/DDBJ databases">
        <title>Sequence of an open reading frame 3' to the GLN3 gene.</title>
        <authorList>
            <person name="El-Berry H.M."/>
            <person name="Cooper T.G."/>
        </authorList>
    </citation>
    <scope>NUCLEOTIDE SEQUENCE [GENOMIC DNA]</scope>
    <source>
        <strain>Sigma 1278B</strain>
    </source>
</reference>
<reference key="2">
    <citation type="journal article" date="1997" name="Nature">
        <title>The nucleotide sequence of Saccharomyces cerevisiae chromosome V.</title>
        <authorList>
            <person name="Dietrich F.S."/>
            <person name="Mulligan J.T."/>
            <person name="Hennessy K.M."/>
            <person name="Yelton M.A."/>
            <person name="Allen E."/>
            <person name="Araujo R."/>
            <person name="Aviles E."/>
            <person name="Berno A."/>
            <person name="Brennan T."/>
            <person name="Carpenter J."/>
            <person name="Chen E."/>
            <person name="Cherry J.M."/>
            <person name="Chung E."/>
            <person name="Duncan M."/>
            <person name="Guzman E."/>
            <person name="Hartzell G."/>
            <person name="Hunicke-Smith S."/>
            <person name="Hyman R.W."/>
            <person name="Kayser A."/>
            <person name="Komp C."/>
            <person name="Lashkari D."/>
            <person name="Lew H."/>
            <person name="Lin D."/>
            <person name="Mosedale D."/>
            <person name="Nakahara K."/>
            <person name="Namath A."/>
            <person name="Norgren R."/>
            <person name="Oefner P."/>
            <person name="Oh C."/>
            <person name="Petel F.X."/>
            <person name="Roberts D."/>
            <person name="Sehl P."/>
            <person name="Schramm S."/>
            <person name="Shogren T."/>
            <person name="Smith V."/>
            <person name="Taylor P."/>
            <person name="Wei Y."/>
            <person name="Botstein D."/>
            <person name="Davis R.W."/>
        </authorList>
    </citation>
    <scope>NUCLEOTIDE SEQUENCE [LARGE SCALE GENOMIC DNA]</scope>
    <source>
        <strain>ATCC 204508 / S288c</strain>
    </source>
</reference>
<reference key="3">
    <citation type="journal article" date="2014" name="G3 (Bethesda)">
        <title>The reference genome sequence of Saccharomyces cerevisiae: Then and now.</title>
        <authorList>
            <person name="Engel S.R."/>
            <person name="Dietrich F.S."/>
            <person name="Fisk D.G."/>
            <person name="Binkley G."/>
            <person name="Balakrishnan R."/>
            <person name="Costanzo M.C."/>
            <person name="Dwight S.S."/>
            <person name="Hitz B.C."/>
            <person name="Karra K."/>
            <person name="Nash R.S."/>
            <person name="Weng S."/>
            <person name="Wong E.D."/>
            <person name="Lloyd P."/>
            <person name="Skrzypek M.S."/>
            <person name="Miyasato S.R."/>
            <person name="Simison M."/>
            <person name="Cherry J.M."/>
        </authorList>
    </citation>
    <scope>GENOME REANNOTATION</scope>
    <scope>SEQUENCE REVISION TO 59</scope>
    <source>
        <strain>ATCC 204508 / S288c</strain>
    </source>
</reference>
<reference key="4">
    <citation type="journal article" date="2003" name="Nature">
        <title>Global analysis of protein expression in yeast.</title>
        <authorList>
            <person name="Ghaemmaghami S."/>
            <person name="Huh W.-K."/>
            <person name="Bower K."/>
            <person name="Howson R.W."/>
            <person name="Belle A."/>
            <person name="Dephoure N."/>
            <person name="O'Shea E.K."/>
            <person name="Weissman J.S."/>
        </authorList>
    </citation>
    <scope>LEVEL OF PROTEIN EXPRESSION [LARGE SCALE ANALYSIS]</scope>
</reference>
<reference key="5">
    <citation type="journal article" date="2008" name="Mol. Cell. Proteomics">
        <title>A multidimensional chromatography technology for in-depth phosphoproteome analysis.</title>
        <authorList>
            <person name="Albuquerque C.P."/>
            <person name="Smolka M.B."/>
            <person name="Payne S.H."/>
            <person name="Bafna V."/>
            <person name="Eng J."/>
            <person name="Zhou H."/>
        </authorList>
    </citation>
    <scope>IDENTIFICATION BY MASS SPECTROMETRY [LARGE SCALE ANALYSIS]</scope>
</reference>
<reference key="6">
    <citation type="journal article" date="2008" name="Nature">
        <title>Identification of Holliday junction resolvases from humans and yeast.</title>
        <authorList>
            <person name="Ip S.C."/>
            <person name="Rass U."/>
            <person name="Blanco M.G."/>
            <person name="Flynn H.R."/>
            <person name="Skehel J.M."/>
            <person name="West S.C."/>
        </authorList>
    </citation>
    <scope>FUNCTION</scope>
</reference>
<reference key="7">
    <citation type="journal article" date="2009" name="Proc. Natl. Acad. Sci. U.S.A.">
        <title>Systematic identification of cell cycle-dependent yeast nucleocytoplasmic shuttling proteins by prediction of composite motifs.</title>
        <authorList>
            <person name="Kosugi S."/>
            <person name="Hasebe M."/>
            <person name="Tomita M."/>
            <person name="Yanagawa H."/>
        </authorList>
    </citation>
    <scope>SUBCELLULAR LOCATION</scope>
</reference>
<reference key="8">
    <citation type="journal article" date="2009" name="Science">
        <title>Global analysis of Cdk1 substrate phosphorylation sites provides insights into evolution.</title>
        <authorList>
            <person name="Holt L.J."/>
            <person name="Tuch B.B."/>
            <person name="Villen J."/>
            <person name="Johnson A.D."/>
            <person name="Gygi S.P."/>
            <person name="Morgan D.O."/>
        </authorList>
    </citation>
    <scope>PHOSPHORYLATION [LARGE SCALE ANALYSIS] AT SER-730 AND SER-731</scope>
    <scope>IDENTIFICATION BY MASS SPECTROMETRY [LARGE SCALE ANALYSIS]</scope>
</reference>
<reference key="9">
    <citation type="journal article" date="2010" name="DNA Repair">
        <title>Functional overlap between the structure-specific nucleases Yen1 and Mus81-Mms4 for DNA-damage repair in S. cerevisiae.</title>
        <authorList>
            <person name="Blanco M.G."/>
            <person name="Matos J."/>
            <person name="Rass U."/>
            <person name="Ip S.C."/>
            <person name="West S.C."/>
        </authorList>
    </citation>
    <scope>FUNCTION</scope>
</reference>
<reference key="10">
    <citation type="journal article" date="2010" name="Mol. Cell">
        <title>Mus81 and Yen1 promote reciprocal exchange during mitotic recombination to maintain genome integrity in budding yeast.</title>
        <authorList>
            <person name="Ho C.K."/>
            <person name="Mazon G."/>
            <person name="Lam A.F."/>
            <person name="Symington L.S."/>
        </authorList>
    </citation>
    <scope>FUNCTION</scope>
</reference>
<reference key="11">
    <citation type="journal article" date="2015" name="Elife">
        <title>Human Holliday junction resolvase GEN1 uses a chromodomain for efficient DNA recognition and cleavage.</title>
        <authorList>
            <person name="Lee S.H."/>
            <person name="Princz L.N."/>
            <person name="Klugel M.F."/>
            <person name="Habermann B."/>
            <person name="Pfander B."/>
            <person name="Biertumpfel C."/>
        </authorList>
    </citation>
    <scope>MUTAGENESIS OF ASP-41; ILE-97; LYS-298; LYS-469; PHE-478; LYS-484; ARG-486; TYR-487; ASN-526; LEU-528; TRP-529 AND LEU-530</scope>
</reference>
<proteinExistence type="evidence at protein level"/>
<comment type="function">
    <text evidence="3 5 6">Endonuclease which resolves Holliday junctions by the introduction of symmetrically related cuts across the junction point, to produce nicked duplex products in which the nicks can be readily ligated. Four-way DNA intermediates, also known as Holliday junctions, are formed during homologous recombination and DNA repair, and their resolution is necessary for proper chromosome segregation. Involved in DNA-damage repair in vegetative cells.</text>
</comment>
<comment type="subcellular location">
    <subcellularLocation>
        <location evidence="4">Cytoplasm</location>
    </subcellularLocation>
    <subcellularLocation>
        <location evidence="4">Nucleus</location>
    </subcellularLocation>
    <text>Predominantly nuclear in G1-arrested cells, but cytoplasmically localized after release from G1 arrest.</text>
</comment>
<comment type="miscellaneous">
    <text evidence="2">Present with 131 molecules/cell in log phase SD medium.</text>
</comment>
<comment type="similarity">
    <text evidence="8">Belongs to the XPG/RAD2 endonuclease family. GEN subfamily.</text>
</comment>
<comment type="sequence caution" evidence="8">
    <conflict type="frameshift">
        <sequence resource="EMBL-CDS" id="AAA60376"/>
    </conflict>
</comment>
<protein>
    <recommendedName>
        <fullName>Holliday junction resolvase YEN1</fullName>
        <ecNumber>3.1.-.-</ecNumber>
    </recommendedName>
</protein>
<organism>
    <name type="scientific">Saccharomyces cerevisiae (strain ATCC 204508 / S288c)</name>
    <name type="common">Baker's yeast</name>
    <dbReference type="NCBI Taxonomy" id="559292"/>
    <lineage>
        <taxon>Eukaryota</taxon>
        <taxon>Fungi</taxon>
        <taxon>Dikarya</taxon>
        <taxon>Ascomycota</taxon>
        <taxon>Saccharomycotina</taxon>
        <taxon>Saccharomycetes</taxon>
        <taxon>Saccharomycetales</taxon>
        <taxon>Saccharomycetaceae</taxon>
        <taxon>Saccharomyces</taxon>
    </lineage>
</organism>
<gene>
    <name type="primary">YEN1</name>
    <name type="ordered locus">YER041W</name>
</gene>